<dbReference type="EMBL" id="AF006665">
    <property type="protein sequence ID" value="AAB81144.1"/>
    <property type="status" value="ALT_INIT"/>
    <property type="molecule type" value="Genomic_DNA"/>
</dbReference>
<dbReference type="EMBL" id="AL009126">
    <property type="protein sequence ID" value="CAB13875.1"/>
    <property type="molecule type" value="Genomic_DNA"/>
</dbReference>
<dbReference type="RefSeq" id="NP_389865.1">
    <property type="nucleotide sequence ID" value="NC_000964.3"/>
</dbReference>
<dbReference type="RefSeq" id="WP_004399259.1">
    <property type="nucleotide sequence ID" value="NZ_OZ025638.1"/>
</dbReference>
<dbReference type="SMR" id="O31865"/>
<dbReference type="FunCoup" id="O31865">
    <property type="interactions" value="4"/>
</dbReference>
<dbReference type="STRING" id="224308.BSU19840"/>
<dbReference type="PaxDb" id="224308-BSU19840"/>
<dbReference type="EnsemblBacteria" id="CAB13875">
    <property type="protein sequence ID" value="CAB13875"/>
    <property type="gene ID" value="BSU_19840"/>
</dbReference>
<dbReference type="GeneID" id="940077"/>
<dbReference type="KEGG" id="bsu:BSU19840"/>
<dbReference type="PATRIC" id="fig|224308.179.peg.2173"/>
<dbReference type="InParanoid" id="O31865"/>
<dbReference type="OrthoDB" id="2472497at2"/>
<dbReference type="BioCyc" id="BSUB:BSU19840-MONOMER"/>
<dbReference type="Proteomes" id="UP000001570">
    <property type="component" value="Chromosome"/>
</dbReference>
<dbReference type="GO" id="GO:0003677">
    <property type="term" value="F:DNA binding"/>
    <property type="evidence" value="ECO:0007669"/>
    <property type="project" value="UniProtKB-KW"/>
</dbReference>
<dbReference type="CDD" id="cd00093">
    <property type="entry name" value="HTH_XRE"/>
    <property type="match status" value="1"/>
</dbReference>
<dbReference type="Gene3D" id="1.10.260.40">
    <property type="entry name" value="lambda repressor-like DNA-binding domains"/>
    <property type="match status" value="1"/>
</dbReference>
<dbReference type="InterPro" id="IPR001387">
    <property type="entry name" value="Cro/C1-type_HTH"/>
</dbReference>
<dbReference type="InterPro" id="IPR010982">
    <property type="entry name" value="Lambda_DNA-bd_dom_sf"/>
</dbReference>
<dbReference type="Pfam" id="PF13443">
    <property type="entry name" value="HTH_26"/>
    <property type="match status" value="1"/>
</dbReference>
<dbReference type="SMART" id="SM00530">
    <property type="entry name" value="HTH_XRE"/>
    <property type="match status" value="1"/>
</dbReference>
<dbReference type="SUPFAM" id="SSF47413">
    <property type="entry name" value="lambda repressor-like DNA-binding domains"/>
    <property type="match status" value="1"/>
</dbReference>
<evidence type="ECO:0000250" key="1"/>
<evidence type="ECO:0000305" key="2"/>
<accession>O31865</accession>
<accession>O30466</accession>
<protein>
    <recommendedName>
        <fullName>SPbeta prophage-derived uncharacterized HTH-type transcriptional regulator YotL</fullName>
    </recommendedName>
</protein>
<gene>
    <name type="primary">yotL</name>
    <name type="synonym">yokH</name>
    <name type="ordered locus">BSU19840</name>
</gene>
<organism>
    <name type="scientific">Bacillus subtilis (strain 168)</name>
    <dbReference type="NCBI Taxonomy" id="224308"/>
    <lineage>
        <taxon>Bacteria</taxon>
        <taxon>Bacillati</taxon>
        <taxon>Bacillota</taxon>
        <taxon>Bacilli</taxon>
        <taxon>Bacillales</taxon>
        <taxon>Bacillaceae</taxon>
        <taxon>Bacillus</taxon>
    </lineage>
</organism>
<reference key="1">
    <citation type="journal article" date="1998" name="DNA Res.">
        <title>Sequence analysis of the Bacillus subtilis 168 chromosome region between the sspC and odhA loci (184 degrees-180 degrees).</title>
        <authorList>
            <person name="Ghim S.-Y."/>
            <person name="Choi S.-K."/>
            <person name="Shin B.-S."/>
            <person name="Jeong Y.-M."/>
            <person name="Sorokin A."/>
            <person name="Ehrlich S.D."/>
            <person name="Park S.-H."/>
        </authorList>
    </citation>
    <scope>NUCLEOTIDE SEQUENCE [GENOMIC DNA]</scope>
    <source>
        <strain>168</strain>
    </source>
</reference>
<reference key="2">
    <citation type="journal article" date="1997" name="Nature">
        <title>The complete genome sequence of the Gram-positive bacterium Bacillus subtilis.</title>
        <authorList>
            <person name="Kunst F."/>
            <person name="Ogasawara N."/>
            <person name="Moszer I."/>
            <person name="Albertini A.M."/>
            <person name="Alloni G."/>
            <person name="Azevedo V."/>
            <person name="Bertero M.G."/>
            <person name="Bessieres P."/>
            <person name="Bolotin A."/>
            <person name="Borchert S."/>
            <person name="Borriss R."/>
            <person name="Boursier L."/>
            <person name="Brans A."/>
            <person name="Braun M."/>
            <person name="Brignell S.C."/>
            <person name="Bron S."/>
            <person name="Brouillet S."/>
            <person name="Bruschi C.V."/>
            <person name="Caldwell B."/>
            <person name="Capuano V."/>
            <person name="Carter N.M."/>
            <person name="Choi S.-K."/>
            <person name="Codani J.-J."/>
            <person name="Connerton I.F."/>
            <person name="Cummings N.J."/>
            <person name="Daniel R.A."/>
            <person name="Denizot F."/>
            <person name="Devine K.M."/>
            <person name="Duesterhoeft A."/>
            <person name="Ehrlich S.D."/>
            <person name="Emmerson P.T."/>
            <person name="Entian K.-D."/>
            <person name="Errington J."/>
            <person name="Fabret C."/>
            <person name="Ferrari E."/>
            <person name="Foulger D."/>
            <person name="Fritz C."/>
            <person name="Fujita M."/>
            <person name="Fujita Y."/>
            <person name="Fuma S."/>
            <person name="Galizzi A."/>
            <person name="Galleron N."/>
            <person name="Ghim S.-Y."/>
            <person name="Glaser P."/>
            <person name="Goffeau A."/>
            <person name="Golightly E.J."/>
            <person name="Grandi G."/>
            <person name="Guiseppi G."/>
            <person name="Guy B.J."/>
            <person name="Haga K."/>
            <person name="Haiech J."/>
            <person name="Harwood C.R."/>
            <person name="Henaut A."/>
            <person name="Hilbert H."/>
            <person name="Holsappel S."/>
            <person name="Hosono S."/>
            <person name="Hullo M.-F."/>
            <person name="Itaya M."/>
            <person name="Jones L.-M."/>
            <person name="Joris B."/>
            <person name="Karamata D."/>
            <person name="Kasahara Y."/>
            <person name="Klaerr-Blanchard M."/>
            <person name="Klein C."/>
            <person name="Kobayashi Y."/>
            <person name="Koetter P."/>
            <person name="Koningstein G."/>
            <person name="Krogh S."/>
            <person name="Kumano M."/>
            <person name="Kurita K."/>
            <person name="Lapidus A."/>
            <person name="Lardinois S."/>
            <person name="Lauber J."/>
            <person name="Lazarevic V."/>
            <person name="Lee S.-M."/>
            <person name="Levine A."/>
            <person name="Liu H."/>
            <person name="Masuda S."/>
            <person name="Mauel C."/>
            <person name="Medigue C."/>
            <person name="Medina N."/>
            <person name="Mellado R.P."/>
            <person name="Mizuno M."/>
            <person name="Moestl D."/>
            <person name="Nakai S."/>
            <person name="Noback M."/>
            <person name="Noone D."/>
            <person name="O'Reilly M."/>
            <person name="Ogawa K."/>
            <person name="Ogiwara A."/>
            <person name="Oudega B."/>
            <person name="Park S.-H."/>
            <person name="Parro V."/>
            <person name="Pohl T.M."/>
            <person name="Portetelle D."/>
            <person name="Porwollik S."/>
            <person name="Prescott A.M."/>
            <person name="Presecan E."/>
            <person name="Pujic P."/>
            <person name="Purnelle B."/>
            <person name="Rapoport G."/>
            <person name="Rey M."/>
            <person name="Reynolds S."/>
            <person name="Rieger M."/>
            <person name="Rivolta C."/>
            <person name="Rocha E."/>
            <person name="Roche B."/>
            <person name="Rose M."/>
            <person name="Sadaie Y."/>
            <person name="Sato T."/>
            <person name="Scanlan E."/>
            <person name="Schleich S."/>
            <person name="Schroeter R."/>
            <person name="Scoffone F."/>
            <person name="Sekiguchi J."/>
            <person name="Sekowska A."/>
            <person name="Seror S.J."/>
            <person name="Serror P."/>
            <person name="Shin B.-S."/>
            <person name="Soldo B."/>
            <person name="Sorokin A."/>
            <person name="Tacconi E."/>
            <person name="Takagi T."/>
            <person name="Takahashi H."/>
            <person name="Takemaru K."/>
            <person name="Takeuchi M."/>
            <person name="Tamakoshi A."/>
            <person name="Tanaka T."/>
            <person name="Terpstra P."/>
            <person name="Tognoni A."/>
            <person name="Tosato V."/>
            <person name="Uchiyama S."/>
            <person name="Vandenbol M."/>
            <person name="Vannier F."/>
            <person name="Vassarotti A."/>
            <person name="Viari A."/>
            <person name="Wambutt R."/>
            <person name="Wedler E."/>
            <person name="Wedler H."/>
            <person name="Weitzenegger T."/>
            <person name="Winters P."/>
            <person name="Wipat A."/>
            <person name="Yamamoto H."/>
            <person name="Yamane K."/>
            <person name="Yasumoto K."/>
            <person name="Yata K."/>
            <person name="Yoshida K."/>
            <person name="Yoshikawa H.-F."/>
            <person name="Zumstein E."/>
            <person name="Yoshikawa H."/>
            <person name="Danchin A."/>
        </authorList>
    </citation>
    <scope>NUCLEOTIDE SEQUENCE [LARGE SCALE GENOMIC DNA]</scope>
    <source>
        <strain>168</strain>
    </source>
</reference>
<name>YOTL_BACSU</name>
<proteinExistence type="predicted"/>
<sequence length="80" mass="9294">MKKQWKPVDSRLNELMHEYSVSIEDLVECTGLSKQRINDYVGGFKSNMNIGTAMTFADAIGCSIEELYVWNFKERRQLTK</sequence>
<comment type="sequence caution" evidence="2">
    <conflict type="erroneous initiation">
        <sequence resource="EMBL-CDS" id="AAB81144"/>
    </conflict>
</comment>
<keyword id="KW-0238">DNA-binding</keyword>
<keyword id="KW-1185">Reference proteome</keyword>
<keyword id="KW-0804">Transcription</keyword>
<keyword id="KW-0805">Transcription regulation</keyword>
<feature type="chain" id="PRO_0000383640" description="SPbeta prophage-derived uncharacterized HTH-type transcriptional regulator YotL">
    <location>
        <begin position="1"/>
        <end position="80"/>
    </location>
</feature>
<feature type="domain" description="HTH cro/C1-type">
    <location>
        <begin position="12"/>
        <end position="67"/>
    </location>
</feature>
<feature type="DNA-binding region" description="H-T-H motif" evidence="1">
    <location>
        <begin position="23"/>
        <end position="42"/>
    </location>
</feature>